<name>OSH3_YEAST</name>
<evidence type="ECO:0000255" key="1"/>
<evidence type="ECO:0000255" key="2">
    <source>
        <dbReference type="PROSITE-ProRule" id="PRU00145"/>
    </source>
</evidence>
<evidence type="ECO:0000256" key="3">
    <source>
        <dbReference type="SAM" id="MobiDB-lite"/>
    </source>
</evidence>
<evidence type="ECO:0000269" key="4">
    <source>
    </source>
</evidence>
<evidence type="ECO:0000269" key="5">
    <source>
    </source>
</evidence>
<evidence type="ECO:0000269" key="6">
    <source>
    </source>
</evidence>
<evidence type="ECO:0000269" key="7">
    <source>
    </source>
</evidence>
<evidence type="ECO:0000269" key="8">
    <source>
    </source>
</evidence>
<evidence type="ECO:0000269" key="9">
    <source>
    </source>
</evidence>
<evidence type="ECO:0000269" key="10">
    <source>
    </source>
</evidence>
<evidence type="ECO:0000269" key="11">
    <source>
    </source>
</evidence>
<evidence type="ECO:0000269" key="12">
    <source>
    </source>
</evidence>
<evidence type="ECO:0000269" key="13">
    <source>
    </source>
</evidence>
<evidence type="ECO:0000269" key="14">
    <source>
    </source>
</evidence>
<evidence type="ECO:0000303" key="15">
    <source>
    </source>
</evidence>
<evidence type="ECO:0000305" key="16"/>
<evidence type="ECO:0000305" key="17">
    <source>
    </source>
</evidence>
<evidence type="ECO:0000305" key="18">
    <source>
    </source>
</evidence>
<evidence type="ECO:0000305" key="19">
    <source>
    </source>
</evidence>
<evidence type="ECO:0007744" key="20">
    <source>
        <dbReference type="PDB" id="4IAP"/>
    </source>
</evidence>
<evidence type="ECO:0007744" key="21">
    <source>
        <dbReference type="PDB" id="4IC4"/>
    </source>
</evidence>
<evidence type="ECO:0007744" key="22">
    <source>
        <dbReference type="PDB" id="4INQ"/>
    </source>
</evidence>
<evidence type="ECO:0007744" key="23">
    <source>
    </source>
</evidence>
<evidence type="ECO:0007744" key="24">
    <source>
    </source>
</evidence>
<evidence type="ECO:0007744" key="25">
    <source>
    </source>
</evidence>
<evidence type="ECO:0007744" key="26">
    <source>
    </source>
</evidence>
<evidence type="ECO:0007829" key="27">
    <source>
        <dbReference type="PDB" id="4IAP"/>
    </source>
</evidence>
<evidence type="ECO:0007829" key="28">
    <source>
        <dbReference type="PDB" id="4IC4"/>
    </source>
</evidence>
<organism>
    <name type="scientific">Saccharomyces cerevisiae (strain ATCC 204508 / S288c)</name>
    <name type="common">Baker's yeast</name>
    <dbReference type="NCBI Taxonomy" id="559292"/>
    <lineage>
        <taxon>Eukaryota</taxon>
        <taxon>Fungi</taxon>
        <taxon>Dikarya</taxon>
        <taxon>Ascomycota</taxon>
        <taxon>Saccharomycotina</taxon>
        <taxon>Saccharomycetes</taxon>
        <taxon>Saccharomycetales</taxon>
        <taxon>Saccharomycetaceae</taxon>
        <taxon>Saccharomyces</taxon>
    </lineage>
</organism>
<sequence>METIDIQNRSFVVRWVKCGRGDVINYQIKPLKKSIEVGIYKKLKSSVDDHASAVHIAPDTKTLLDYTTKSLLHKGSSSNIEEHHRRSSQHSHSSSNGSDNKRKERSYSSLSISGIQQQSQEIPLREKLSASGFTLVKRVGNVSGNTMVQGDLEVKDTDYYYAFILDNSSSKNAKKKILFNASVINGDNQSMISTRSTPPARPTALSRTSTQQDMLFRVGQGRYLQGYLLKKRRKRLQGFKKRFFTLDFRYGTLSYYLNDHNQTCRGEIVISLSSVSANKKDKIIIIDSGMEVWVLKATTKENWQSWVDALQTCFDDQFEDKDTSTLEENPDILDDDKEVINKSSPQDHDHLTPTATTKSALSHRQHTQKDMDDIYVPLPSESYATFSMNLRLIQQRLEQCKKDSLSYKPTTLHQRSEGLNGTHSSSSVFTNNRVSSFNHSSSGMTSSDSLASEEVPSNKTYIEHALYNQLADLEVFVSRFVTQGEVLFKDHQILCKKAKDTRVSLTSYLSENDEFFDAEEEISRGVIILPDTEDDINNIVEETPLLGKSDQNEFTKEVQLSGSEQIASSSVESYTTNDENHSRKHLKNRHKNRRRGHPHHQKTKSAQSSTETFTSKDLFALSYPKSVTRRNDIPEAAASPPSLLSFLRKNVGKDLSSIAMPVTSNEPISILQLISETFEYAPLLTKATQRPDPITFVSAFAISFLSIYRDKTRTLRKPFNPLLAETFELIREDMGFRLISEKVSHRPPVFAFFAEHLDWECSYTVTPSQKFWGKSIELNNEGILRLKFKTTGELFEWTQPTTILKNLIAGERYMEPVNEFEVHSSKGDKSHILFDKAGMFSGRSEGFKVSIIPPPSSNRKKETLAGKWTQSLANETTHETIWEVGDLVSNPKKKYGFTKFTANLNEITEIEKGNLPPTDSRLRPDIRAYEEGNVDKAEEWKLKLEQLQRERRNKGQDVEPKYFEKVSKNEWKYITGPKSYWERRKKHDWSDISQLW</sequence>
<comment type="function">
    <text evidence="4 9 10 12 13 14">Lipid transport protein (LTP) involved in non-vesicular transfer of lipids between membranes. Functions in phosphoinositide-coupled directional transport of various lipids by carrying the lipid molecule in a hydrophobic pocket and transferring it between membranes through the cytosol. Involved in maintenance of intracellular sterol distribution and homeostasis (PubMed:11238399, PubMed:15173322). May serve as a sensor of PI4P levels at PM-ER membrane contact site, regulating PI4P phosphatase SAC1 activity (PubMed:21295699). May be involved in ergosterol transport from the plasma membrane (PM) to the ER, however it does not bind sterols directly (PubMed:16585271, PubMed:23791945). Plays a role in the positive regulation of vesicular transport of ceramide from the ER to the Golgi, negatively regulating COPII-mediated ER export of cargos (PubMed:24213531).</text>
</comment>
<comment type="subunit">
    <text evidence="18">Interacts with SCS2.</text>
</comment>
<comment type="interaction">
    <interactant intactId="EBI-12630">
        <id>P38713</id>
    </interactant>
    <interactant intactId="EBI-15686">
        <id>P45818</id>
        <label>ROK1</label>
    </interactant>
    <organismsDiffer>false</organismsDiffer>
    <experiments>3</experiments>
</comment>
<comment type="interaction">
    <interactant intactId="EBI-12630">
        <id>P38713</id>
    </interactant>
    <interactant intactId="EBI-16210">
        <id>P32368</id>
        <label>SAC1</label>
    </interactant>
    <organismsDiffer>false</organismsDiffer>
    <experiments>2</experiments>
</comment>
<comment type="interaction">
    <interactant intactId="EBI-12630">
        <id>P38713</id>
    </interactant>
    <interactant intactId="EBI-16735">
        <id>P40075</id>
        <label>SCS2</label>
    </interactant>
    <organismsDiffer>false</organismsDiffer>
    <experiments>2</experiments>
</comment>
<comment type="subcellular location">
    <subcellularLocation>
        <location evidence="5 6 11">Cytoplasm</location>
    </subcellularLocation>
    <subcellularLocation>
        <location evidence="11">Endoplasmic reticulum membrane</location>
    </subcellularLocation>
    <text evidence="6 11 12">Enriched at the cell periphery in a SCS2-dependent manner (PubMed:12727870). Enriched on regions of the ER in close proximity with the plasma membrane (PM), which may represent PM-ER membrane contact sites (MCS) (PubMed:20008566). Localizes to PM-ER membrane contact sites dependent upon PM PI4P levels (PubMed:21295699).</text>
</comment>
<comment type="domain">
    <text evidence="17">The GOLD (Golgi dynamics) domain is predicted to mediate diverse protein-protein interactions.</text>
</comment>
<comment type="domain">
    <text evidence="8">The PH domain weakly binds to phosphoinositides.</text>
</comment>
<comment type="domain">
    <text evidence="6">The FFAT (two phenylalanines in an acidic tract) motif is required for interaction with SCS2 and proper localization of the protein.</text>
</comment>
<comment type="domain">
    <text evidence="13 19">The OSBP-related domain (ORD) mediates binding of sterols and phospholipids. It displays an incomplete beta-barrel containing a central hydrophobic tunnel that can accommodate a single lipid molecule with a flexible lid covering the tunnel entrance. The ORD can bind two membranes simultaneously. It has at least two membrane-binding surfaces; one near the mouth of the lipid-binding pocket and a distal site that can bind a second membrane. These structural features correlate with the phosphatidylinositol 4-phosphate (PI(4)P)-coupled lipid transport optimized in closely apposed membranes, such as organelle contact sites. The lipid transfer cycle starts from the association of the LTP with a donor membrane, which accompanies conformational changes that uncover the ligand-binding pocket. The tunnel opening is generally mediated by displacement of the lid covering the binding pocket allowing uptake or release of a lipid molecule. The LTPs extract the lipid from the membrane by providing a hydrophobic environment as well as specific interaction. Dissociation from the donor membrane shifts the conformation to a closed form. Then, the LTPs loaded with a cargo lipid diffuse through the aqueous phase. Lid opening may be induced by the interaction of a hydrophobic side of the lid with the target membranes (Probable). The OSH3 ORD does not accept sterols due to the small hydrophobic tunnel (PubMed:23791945).</text>
</comment>
<comment type="miscellaneous">
    <text evidence="7">Present with 589 molecules/cell in log phase SD medium.</text>
</comment>
<comment type="similarity">
    <text evidence="16">Belongs to the OSBP family.</text>
</comment>
<dbReference type="EMBL" id="U10556">
    <property type="protein sequence ID" value="AAB68890.1"/>
    <property type="molecule type" value="Genomic_DNA"/>
</dbReference>
<dbReference type="EMBL" id="BK006934">
    <property type="protein sequence ID" value="DAA06767.1"/>
    <property type="molecule type" value="Genomic_DNA"/>
</dbReference>
<dbReference type="PIR" id="S46812">
    <property type="entry name" value="S46812"/>
</dbReference>
<dbReference type="RefSeq" id="NP_011940.1">
    <property type="nucleotide sequence ID" value="NM_001179203.1"/>
</dbReference>
<dbReference type="PDB" id="4IAP">
    <property type="method" value="X-ray"/>
    <property type="resolution" value="2.30 A"/>
    <property type="chains" value="A/B=221-315"/>
</dbReference>
<dbReference type="PDB" id="4IC4">
    <property type="method" value="X-ray"/>
    <property type="resolution" value="1.50 A"/>
    <property type="chains" value="A=605-996"/>
</dbReference>
<dbReference type="PDB" id="4INQ">
    <property type="method" value="X-ray"/>
    <property type="resolution" value="2.20 A"/>
    <property type="chains" value="A=605-996"/>
</dbReference>
<dbReference type="PDBsum" id="4IAP"/>
<dbReference type="PDBsum" id="4IC4"/>
<dbReference type="PDBsum" id="4INQ"/>
<dbReference type="SMR" id="P38713"/>
<dbReference type="BioGRID" id="36507">
    <property type="interactions" value="174"/>
</dbReference>
<dbReference type="DIP" id="DIP-2148N"/>
<dbReference type="ELM" id="P38713"/>
<dbReference type="FunCoup" id="P38713">
    <property type="interactions" value="145"/>
</dbReference>
<dbReference type="IntAct" id="P38713">
    <property type="interactions" value="23"/>
</dbReference>
<dbReference type="MINT" id="P38713"/>
<dbReference type="STRING" id="4932.YHR073W"/>
<dbReference type="GlyGen" id="P38713">
    <property type="glycosylation" value="1 site"/>
</dbReference>
<dbReference type="iPTMnet" id="P38713"/>
<dbReference type="PaxDb" id="4932-YHR073W"/>
<dbReference type="PeptideAtlas" id="P38713"/>
<dbReference type="EnsemblFungi" id="YHR073W_mRNA">
    <property type="protein sequence ID" value="YHR073W"/>
    <property type="gene ID" value="YHR073W"/>
</dbReference>
<dbReference type="GeneID" id="856472"/>
<dbReference type="KEGG" id="sce:YHR073W"/>
<dbReference type="AGR" id="SGD:S000001115"/>
<dbReference type="SGD" id="S000001115">
    <property type="gene designation" value="OSH3"/>
</dbReference>
<dbReference type="VEuPathDB" id="FungiDB:YHR073W"/>
<dbReference type="eggNOG" id="KOG1737">
    <property type="taxonomic scope" value="Eukaryota"/>
</dbReference>
<dbReference type="HOGENOM" id="CLU_007105_4_0_1"/>
<dbReference type="InParanoid" id="P38713"/>
<dbReference type="OMA" id="SYFVRWV"/>
<dbReference type="OrthoDB" id="1854502at2759"/>
<dbReference type="BioCyc" id="YEAST:G3O-31122-MONOMER"/>
<dbReference type="Reactome" id="R-SCE-192105">
    <property type="pathway name" value="Synthesis of bile acids and bile salts"/>
</dbReference>
<dbReference type="BioGRID-ORCS" id="856472">
    <property type="hits" value="0 hits in 10 CRISPR screens"/>
</dbReference>
<dbReference type="CD-CODE" id="E03F929F">
    <property type="entry name" value="Stress granule"/>
</dbReference>
<dbReference type="EvolutionaryTrace" id="P38713"/>
<dbReference type="PRO" id="PR:P38713"/>
<dbReference type="Proteomes" id="UP000002311">
    <property type="component" value="Chromosome VIII"/>
</dbReference>
<dbReference type="RNAct" id="P38713">
    <property type="molecule type" value="protein"/>
</dbReference>
<dbReference type="GO" id="GO:0032541">
    <property type="term" value="C:cortical endoplasmic reticulum"/>
    <property type="evidence" value="ECO:0000314"/>
    <property type="project" value="SGD"/>
</dbReference>
<dbReference type="GO" id="GO:0005737">
    <property type="term" value="C:cytoplasm"/>
    <property type="evidence" value="ECO:0000314"/>
    <property type="project" value="SGD"/>
</dbReference>
<dbReference type="GO" id="GO:0005829">
    <property type="term" value="C:cytosol"/>
    <property type="evidence" value="ECO:0007005"/>
    <property type="project" value="SGD"/>
</dbReference>
<dbReference type="GO" id="GO:0005789">
    <property type="term" value="C:endoplasmic reticulum membrane"/>
    <property type="evidence" value="ECO:0007669"/>
    <property type="project" value="UniProtKB-SubCell"/>
</dbReference>
<dbReference type="GO" id="GO:0097038">
    <property type="term" value="C:perinuclear endoplasmic reticulum"/>
    <property type="evidence" value="ECO:0000318"/>
    <property type="project" value="GO_Central"/>
</dbReference>
<dbReference type="GO" id="GO:0005886">
    <property type="term" value="C:plasma membrane"/>
    <property type="evidence" value="ECO:0000314"/>
    <property type="project" value="SGD"/>
</dbReference>
<dbReference type="GO" id="GO:0008289">
    <property type="term" value="F:lipid binding"/>
    <property type="evidence" value="ECO:0000314"/>
    <property type="project" value="SGD"/>
</dbReference>
<dbReference type="GO" id="GO:0032934">
    <property type="term" value="F:sterol binding"/>
    <property type="evidence" value="ECO:0000318"/>
    <property type="project" value="GO_Central"/>
</dbReference>
<dbReference type="GO" id="GO:0120015">
    <property type="term" value="F:sterol transfer activity"/>
    <property type="evidence" value="ECO:0000314"/>
    <property type="project" value="SGD"/>
</dbReference>
<dbReference type="GO" id="GO:0006897">
    <property type="term" value="P:endocytosis"/>
    <property type="evidence" value="ECO:0000316"/>
    <property type="project" value="SGD"/>
</dbReference>
<dbReference type="GO" id="GO:0035621">
    <property type="term" value="P:ER to Golgi ceramide transport"/>
    <property type="evidence" value="ECO:0000315"/>
    <property type="project" value="SGD"/>
</dbReference>
<dbReference type="GO" id="GO:0006887">
    <property type="term" value="P:exocytosis"/>
    <property type="evidence" value="ECO:0000316"/>
    <property type="project" value="SGD"/>
</dbReference>
<dbReference type="GO" id="GO:0001403">
    <property type="term" value="P:invasive growth in response to glucose limitation"/>
    <property type="evidence" value="ECO:0000316"/>
    <property type="project" value="SGD"/>
</dbReference>
<dbReference type="GO" id="GO:0000742">
    <property type="term" value="P:karyogamy involved in conjugation with cellular fusion"/>
    <property type="evidence" value="ECO:0000316"/>
    <property type="project" value="SGD"/>
</dbReference>
<dbReference type="GO" id="GO:0030011">
    <property type="term" value="P:maintenance of cell polarity"/>
    <property type="evidence" value="ECO:0000316"/>
    <property type="project" value="SGD"/>
</dbReference>
<dbReference type="GO" id="GO:0034727">
    <property type="term" value="P:piecemeal microautophagy of the nucleus"/>
    <property type="evidence" value="ECO:0000316"/>
    <property type="project" value="SGD"/>
</dbReference>
<dbReference type="GO" id="GO:0007124">
    <property type="term" value="P:pseudohyphal growth"/>
    <property type="evidence" value="ECO:0000315"/>
    <property type="project" value="SGD"/>
</dbReference>
<dbReference type="GO" id="GO:0061709">
    <property type="term" value="P:reticulophagy"/>
    <property type="evidence" value="ECO:0000316"/>
    <property type="project" value="SGD"/>
</dbReference>
<dbReference type="GO" id="GO:0015918">
    <property type="term" value="P:sterol transport"/>
    <property type="evidence" value="ECO:0000314"/>
    <property type="project" value="SGD"/>
</dbReference>
<dbReference type="CDD" id="cd13289">
    <property type="entry name" value="PH_Osh3p_yeast"/>
    <property type="match status" value="1"/>
</dbReference>
<dbReference type="FunFam" id="2.40.160.120:FF:000013">
    <property type="entry name" value="Oxysterol binding protein"/>
    <property type="match status" value="1"/>
</dbReference>
<dbReference type="FunFam" id="2.30.29.30:FF:000573">
    <property type="entry name" value="Oxysterol-binding family protein"/>
    <property type="match status" value="1"/>
</dbReference>
<dbReference type="Gene3D" id="2.40.160.120">
    <property type="match status" value="1"/>
</dbReference>
<dbReference type="Gene3D" id="2.30.29.30">
    <property type="entry name" value="Pleckstrin-homology domain (PH domain)/Phosphotyrosine-binding domain (PTB)"/>
    <property type="match status" value="1"/>
</dbReference>
<dbReference type="InterPro" id="IPR036598">
    <property type="entry name" value="GOLD_dom_sf"/>
</dbReference>
<dbReference type="InterPro" id="IPR037239">
    <property type="entry name" value="OSBP_sf"/>
</dbReference>
<dbReference type="InterPro" id="IPR000648">
    <property type="entry name" value="Oxysterol-bd"/>
</dbReference>
<dbReference type="InterPro" id="IPR018494">
    <property type="entry name" value="Oxysterol-bd_CS"/>
</dbReference>
<dbReference type="InterPro" id="IPR011993">
    <property type="entry name" value="PH-like_dom_sf"/>
</dbReference>
<dbReference type="InterPro" id="IPR041680">
    <property type="entry name" value="PH_8"/>
</dbReference>
<dbReference type="InterPro" id="IPR001849">
    <property type="entry name" value="PH_domain"/>
</dbReference>
<dbReference type="PANTHER" id="PTHR10972:SF203">
    <property type="entry name" value="OXYSTEROL-BINDING PROTEIN HOMOLOG 3"/>
    <property type="match status" value="1"/>
</dbReference>
<dbReference type="PANTHER" id="PTHR10972">
    <property type="entry name" value="OXYSTEROL-BINDING PROTEIN-RELATED"/>
    <property type="match status" value="1"/>
</dbReference>
<dbReference type="Pfam" id="PF01237">
    <property type="entry name" value="Oxysterol_BP"/>
    <property type="match status" value="1"/>
</dbReference>
<dbReference type="Pfam" id="PF15409">
    <property type="entry name" value="PH_8"/>
    <property type="match status" value="1"/>
</dbReference>
<dbReference type="SMART" id="SM00233">
    <property type="entry name" value="PH"/>
    <property type="match status" value="1"/>
</dbReference>
<dbReference type="SUPFAM" id="SSF144000">
    <property type="entry name" value="Oxysterol-binding protein-like"/>
    <property type="match status" value="1"/>
</dbReference>
<dbReference type="SUPFAM" id="SSF50729">
    <property type="entry name" value="PH domain-like"/>
    <property type="match status" value="1"/>
</dbReference>
<dbReference type="SUPFAM" id="SSF101576">
    <property type="entry name" value="Supernatant protein factor (SPF), C-terminal domain"/>
    <property type="match status" value="1"/>
</dbReference>
<dbReference type="PROSITE" id="PS01013">
    <property type="entry name" value="OSBP"/>
    <property type="match status" value="1"/>
</dbReference>
<dbReference type="PROSITE" id="PS50003">
    <property type="entry name" value="PH_DOMAIN"/>
    <property type="match status" value="1"/>
</dbReference>
<protein>
    <recommendedName>
        <fullName evidence="15">Oxysterol-binding protein homolog 3</fullName>
    </recommendedName>
    <alternativeName>
        <fullName>Oxysterol-binding protein-related protein 3</fullName>
        <shortName>ORP 3</shortName>
        <shortName>OSBP-related protein 3</shortName>
    </alternativeName>
</protein>
<proteinExistence type="evidence at protein level"/>
<keyword id="KW-0002">3D-structure</keyword>
<keyword id="KW-0963">Cytoplasm</keyword>
<keyword id="KW-0256">Endoplasmic reticulum</keyword>
<keyword id="KW-0445">Lipid transport</keyword>
<keyword id="KW-0446">Lipid-binding</keyword>
<keyword id="KW-0472">Membrane</keyword>
<keyword id="KW-0597">Phosphoprotein</keyword>
<keyword id="KW-1185">Reference proteome</keyword>
<keyword id="KW-0813">Transport</keyword>
<accession>P38713</accession>
<accession>D3DL23</accession>
<reference key="1">
    <citation type="journal article" date="1994" name="Science">
        <title>Complete nucleotide sequence of Saccharomyces cerevisiae chromosome VIII.</title>
        <authorList>
            <person name="Johnston M."/>
            <person name="Andrews S."/>
            <person name="Brinkman R."/>
            <person name="Cooper J."/>
            <person name="Ding H."/>
            <person name="Dover J."/>
            <person name="Du Z."/>
            <person name="Favello A."/>
            <person name="Fulton L."/>
            <person name="Gattung S."/>
            <person name="Geisel C."/>
            <person name="Kirsten J."/>
            <person name="Kucaba T."/>
            <person name="Hillier L.W."/>
            <person name="Jier M."/>
            <person name="Johnston L."/>
            <person name="Langston Y."/>
            <person name="Latreille P."/>
            <person name="Louis E.J."/>
            <person name="Macri C."/>
            <person name="Mardis E."/>
            <person name="Menezes S."/>
            <person name="Mouser L."/>
            <person name="Nhan M."/>
            <person name="Rifkin L."/>
            <person name="Riles L."/>
            <person name="St Peter H."/>
            <person name="Trevaskis E."/>
            <person name="Vaughan K."/>
            <person name="Vignati D."/>
            <person name="Wilcox L."/>
            <person name="Wohldman P."/>
            <person name="Waterston R."/>
            <person name="Wilson R."/>
            <person name="Vaudin M."/>
        </authorList>
    </citation>
    <scope>NUCLEOTIDE SEQUENCE [LARGE SCALE GENOMIC DNA]</scope>
    <source>
        <strain>ATCC 204508 / S288c</strain>
    </source>
</reference>
<reference key="2">
    <citation type="journal article" date="2014" name="G3 (Bethesda)">
        <title>The reference genome sequence of Saccharomyces cerevisiae: Then and now.</title>
        <authorList>
            <person name="Engel S.R."/>
            <person name="Dietrich F.S."/>
            <person name="Fisk D.G."/>
            <person name="Binkley G."/>
            <person name="Balakrishnan R."/>
            <person name="Costanzo M.C."/>
            <person name="Dwight S.S."/>
            <person name="Hitz B.C."/>
            <person name="Karra K."/>
            <person name="Nash R.S."/>
            <person name="Weng S."/>
            <person name="Wong E.D."/>
            <person name="Lloyd P."/>
            <person name="Skrzypek M.S."/>
            <person name="Miyasato S.R."/>
            <person name="Simison M."/>
            <person name="Cherry J.M."/>
        </authorList>
    </citation>
    <scope>GENOME REANNOTATION</scope>
    <source>
        <strain>ATCC 204508 / S288c</strain>
    </source>
</reference>
<reference key="3">
    <citation type="journal article" date="2001" name="Mol. Biol. Cell">
        <title>Dual targeting of Osh1p, a yeast homologue of oxysterol-binding protein, to both the Golgi and the nucleus-vacuole junction.</title>
        <authorList>
            <person name="Levine T.P."/>
            <person name="Munro S."/>
        </authorList>
    </citation>
    <scope>SUBCELLULAR LOCATION</scope>
</reference>
<reference key="4">
    <citation type="journal article" date="2001" name="Genetics">
        <title>Overlapping functions of the yeast oxysterol-binding protein homologues.</title>
        <authorList>
            <person name="Beh C.T."/>
            <person name="Cool L."/>
            <person name="Phillips J."/>
            <person name="Rine J."/>
        </authorList>
    </citation>
    <scope>GENETIC ANALYSIS</scope>
</reference>
<reference key="5">
    <citation type="journal article" date="2002" name="Genome Biol.">
        <title>The GOLD domain, a novel protein module involved in Golgi function and secretion.</title>
        <authorList>
            <person name="Anantharaman V."/>
            <person name="Aravind L."/>
        </authorList>
    </citation>
    <scope>DOMAIN</scope>
</reference>
<reference key="6">
    <citation type="journal article" date="2003" name="EMBO J.">
        <title>A conserved ER targeting motif in three families of lipid binding proteins and in Opi1p binds VAP.</title>
        <authorList>
            <person name="Loewen C.J.R."/>
            <person name="Roy A."/>
            <person name="Levine T.P."/>
        </authorList>
    </citation>
    <scope>DOMAIN FFAT MOTIF</scope>
    <scope>SUBCELLULAR LOCATION</scope>
</reference>
<reference key="7">
    <citation type="journal article" date="2003" name="Nature">
        <title>Global analysis of protein expression in yeast.</title>
        <authorList>
            <person name="Ghaemmaghami S."/>
            <person name="Huh W.-K."/>
            <person name="Bower K."/>
            <person name="Howson R.W."/>
            <person name="Belle A."/>
            <person name="Dephoure N."/>
            <person name="O'Shea E.K."/>
            <person name="Weissman J.S."/>
        </authorList>
    </citation>
    <scope>LEVEL OF PROTEIN EXPRESSION [LARGE SCALE ANALYSIS]</scope>
</reference>
<reference key="8">
    <citation type="journal article" date="2004" name="J. Cell Sci.">
        <title>A role for yeast oxysterol-binding protein homologs in endocytosis and in the maintenance of intracellular sterol-lipid distribution.</title>
        <authorList>
            <person name="Beh C.T."/>
            <person name="Rine J."/>
        </authorList>
    </citation>
    <scope>FUNCTION</scope>
</reference>
<reference key="9">
    <citation type="journal article" date="2004" name="Mol. Cell">
        <title>Genome-wide analysis of membrane targeting by S.cerevisiae pleckstrin homology domains.</title>
        <authorList>
            <person name="Yu J.W."/>
            <person name="Mendrola J.M."/>
            <person name="Audhya A."/>
            <person name="Singh S."/>
            <person name="Keleti D."/>
            <person name="DeWald D.B."/>
            <person name="Murray D."/>
            <person name="Emr S.D."/>
            <person name="Lemmon M.A."/>
        </authorList>
    </citation>
    <scope>DOMAIN</scope>
</reference>
<reference key="10">
    <citation type="journal article" date="2006" name="J. Cell Biol.">
        <title>Nonvesicular sterol movement from plasma membrane to ER requires oxysterol-binding protein-related proteins and phosphoinositides.</title>
        <authorList>
            <person name="Raychaudhuri S."/>
            <person name="Im Y.J."/>
            <person name="Hurley J.H."/>
            <person name="Prinz W.A."/>
        </authorList>
    </citation>
    <scope>FUNCTION</scope>
</reference>
<reference key="11">
    <citation type="journal article" date="2007" name="J. Proteome Res.">
        <title>Large-scale phosphorylation analysis of alpha-factor-arrested Saccharomyces cerevisiae.</title>
        <authorList>
            <person name="Li X."/>
            <person name="Gerber S.A."/>
            <person name="Rudner A.D."/>
            <person name="Beausoleil S.A."/>
            <person name="Haas W."/>
            <person name="Villen J."/>
            <person name="Elias J.E."/>
            <person name="Gygi S.P."/>
        </authorList>
    </citation>
    <scope>PHOSPHORYLATION [LARGE SCALE ANALYSIS] AT THR-210</scope>
    <scope>IDENTIFICATION BY MASS SPECTROMETRY [LARGE SCALE ANALYSIS]</scope>
    <source>
        <strain>ADR376</strain>
    </source>
</reference>
<reference key="12">
    <citation type="journal article" date="2007" name="Proc. Natl. Acad. Sci. U.S.A.">
        <title>Analysis of phosphorylation sites on proteins from Saccharomyces cerevisiae by electron transfer dissociation (ETD) mass spectrometry.</title>
        <authorList>
            <person name="Chi A."/>
            <person name="Huttenhower C."/>
            <person name="Geer L.Y."/>
            <person name="Coon J.J."/>
            <person name="Syka J.E.P."/>
            <person name="Bai D.L."/>
            <person name="Shabanowitz J."/>
            <person name="Burke D.J."/>
            <person name="Troyanskaya O.G."/>
            <person name="Hunt D.F."/>
        </authorList>
    </citation>
    <scope>PHOSPHORYLATION [LARGE SCALE ANALYSIS] AT THR-352</scope>
    <scope>IDENTIFICATION BY MASS SPECTROMETRY [LARGE SCALE ANALYSIS]</scope>
</reference>
<reference key="13">
    <citation type="journal article" date="2008" name="Mol. Cell. Proteomics">
        <title>A multidimensional chromatography technology for in-depth phosphoproteome analysis.</title>
        <authorList>
            <person name="Albuquerque C.P."/>
            <person name="Smolka M.B."/>
            <person name="Payne S.H."/>
            <person name="Bafna V."/>
            <person name="Eng J."/>
            <person name="Zhou H."/>
        </authorList>
    </citation>
    <scope>PHOSPHORYLATION [LARGE SCALE ANALYSIS] AT SER-605</scope>
    <scope>IDENTIFICATION BY MASS SPECTROMETRY [LARGE SCALE ANALYSIS]</scope>
</reference>
<reference key="14">
    <citation type="journal article" date="2009" name="J. Cell Biol.">
        <title>Lipid-regulated sterol transfer between closely apposed membranes by oxysterol-binding protein homologues.</title>
        <authorList>
            <person name="Schulz T.A."/>
            <person name="Choi M.G."/>
            <person name="Raychaudhuri S."/>
            <person name="Mears J.A."/>
            <person name="Ghirlando R."/>
            <person name="Hinshaw J.E."/>
            <person name="Prinz W.A."/>
        </authorList>
    </citation>
    <scope>DOMAIN</scope>
    <scope>SUBCELLULAR LOCATION</scope>
</reference>
<reference key="15">
    <citation type="journal article" date="2009" name="Science">
        <title>Global analysis of Cdk1 substrate phosphorylation sites provides insights into evolution.</title>
        <authorList>
            <person name="Holt L.J."/>
            <person name="Tuch B.B."/>
            <person name="Villen J."/>
            <person name="Johnson A.D."/>
            <person name="Gygi S.P."/>
            <person name="Morgan D.O."/>
        </authorList>
    </citation>
    <scope>PHOSPHORYLATION [LARGE SCALE ANALYSIS] AT SER-190; SER-193; THR-210; THR-323; SER-324 AND THR-325</scope>
    <scope>IDENTIFICATION BY MASS SPECTROMETRY [LARGE SCALE ANALYSIS]</scope>
</reference>
<reference key="16">
    <citation type="journal article" date="2011" name="Cell">
        <title>Osh proteins regulate phosphoinositide metabolism at ER-plasma membrane contact sites.</title>
        <authorList>
            <person name="Stefan C.J."/>
            <person name="Manford A.G."/>
            <person name="Baird D."/>
            <person name="Yamada-Hanff J."/>
            <person name="Mao Y."/>
            <person name="Emr S.D."/>
        </authorList>
    </citation>
    <scope>FUNCTION</scope>
    <scope>SUBCELLULAR LOCATION</scope>
</reference>
<reference key="17">
    <citation type="journal article" date="2012" name="Proc. Natl. Acad. Sci. U.S.A.">
        <title>N-terminal acetylome analyses and functional insights of the N-terminal acetyltransferase NatB.</title>
        <authorList>
            <person name="Van Damme P."/>
            <person name="Lasa M."/>
            <person name="Polevoda B."/>
            <person name="Gazquez C."/>
            <person name="Elosegui-Artola A."/>
            <person name="Kim D.S."/>
            <person name="De Juan-Pardo E."/>
            <person name="Demeyer K."/>
            <person name="Hole K."/>
            <person name="Larrea E."/>
            <person name="Timmerman E."/>
            <person name="Prieto J."/>
            <person name="Arnesen T."/>
            <person name="Sherman F."/>
            <person name="Gevaert K."/>
            <person name="Aldabe R."/>
        </authorList>
    </citation>
    <scope>IDENTIFICATION BY MASS SPECTROMETRY [LARGE SCALE ANALYSIS]</scope>
</reference>
<reference key="18">
    <citation type="journal article" date="2014" name="J. Cell Sci.">
        <title>Osh proteins regulate COPII-mediated vesicular transport of ceramide from the endoplasmic reticulum in budding yeast.</title>
        <authorList>
            <person name="Kajiwara K."/>
            <person name="Ikeda A."/>
            <person name="Aguilera-Romero A."/>
            <person name="Castillon G.A."/>
            <person name="Kagiwada S."/>
            <person name="Hanada K."/>
            <person name="Riezman H."/>
            <person name="Muniz M."/>
            <person name="Funato K."/>
        </authorList>
    </citation>
    <scope>FUNCTION</scope>
</reference>
<reference evidence="20 21 22" key="19">
    <citation type="journal article" date="2013" name="Structure">
        <title>Structure of Osh3 reveals a conserved mode of phosphoinositide binding in oxysterol-binding proteins.</title>
        <authorList>
            <person name="Tong J."/>
            <person name="Yang H."/>
            <person name="Yang H."/>
            <person name="Eom S.H."/>
            <person name="Im Y.J."/>
        </authorList>
    </citation>
    <scope>X-RAY CRYSTALLOGRAPHY (1.50 ANGSTROMS) OF 605-996 IN COMPLEX WITH 1,2-DIOCTANOYL-SN-GLYCERO-3-PHOSPHO-(1D-MYO-INOSITOL-4-PHOSPHATE)</scope>
</reference>
<gene>
    <name evidence="15" type="primary">OSH3</name>
    <name type="ordered locus">YHR073W</name>
</gene>
<feature type="chain" id="PRO_0000100389" description="Oxysterol-binding protein homolog 3">
    <location>
        <begin position="1"/>
        <end position="996"/>
    </location>
</feature>
<feature type="domain" description="PH" evidence="2">
    <location>
        <begin position="221"/>
        <end position="315"/>
    </location>
</feature>
<feature type="region of interest" description="GOLD domain" evidence="1">
    <location>
        <begin position="1"/>
        <end position="183"/>
    </location>
</feature>
<feature type="region of interest" description="Disordered" evidence="3">
    <location>
        <begin position="75"/>
        <end position="114"/>
    </location>
</feature>
<feature type="region of interest" description="Disordered" evidence="3">
    <location>
        <begin position="338"/>
        <end position="372"/>
    </location>
</feature>
<feature type="region of interest" description="Disordered" evidence="3">
    <location>
        <begin position="556"/>
        <end position="611"/>
    </location>
</feature>
<feature type="region of interest" description="OSBP-related domain (ORD)" evidence="16">
    <location>
        <begin position="642"/>
        <end position="982"/>
    </location>
</feature>
<feature type="short sequence motif" description="FFAT">
    <location>
        <begin position="514"/>
        <end position="520"/>
    </location>
</feature>
<feature type="compositionally biased region" description="Polar residues" evidence="3">
    <location>
        <begin position="558"/>
        <end position="577"/>
    </location>
</feature>
<feature type="compositionally biased region" description="Basic residues" evidence="3">
    <location>
        <begin position="582"/>
        <end position="603"/>
    </location>
</feature>
<feature type="binding site" evidence="22">
    <location>
        <begin position="657"/>
        <end position="660"/>
    </location>
    <ligand>
        <name>a 1,2-diacyl-sn-glycero-3-phospho-(1D-myo-inositol 4-phosphate)</name>
        <dbReference type="ChEBI" id="CHEBI:58178"/>
    </ligand>
</feature>
<feature type="binding site" evidence="22">
    <location>
        <position position="717"/>
    </location>
    <ligand>
        <name>a 1,2-diacyl-sn-glycero-3-phospho-(1D-myo-inositol 4-phosphate)</name>
        <dbReference type="ChEBI" id="CHEBI:58178"/>
    </ligand>
</feature>
<feature type="binding site" evidence="22">
    <location>
        <begin position="745"/>
        <end position="746"/>
    </location>
    <ligand>
        <name>a 1,2-diacyl-sn-glycero-3-phospho-(1D-myo-inositol 4-phosphate)</name>
        <dbReference type="ChEBI" id="CHEBI:58178"/>
    </ligand>
</feature>
<feature type="binding site" evidence="22">
    <location>
        <begin position="945"/>
        <end position="949"/>
    </location>
    <ligand>
        <name>a 1,2-diacyl-sn-glycero-3-phospho-(1D-myo-inositol 4-phosphate)</name>
        <dbReference type="ChEBI" id="CHEBI:58178"/>
    </ligand>
</feature>
<feature type="modified residue" description="Phosphoserine" evidence="26">
    <location>
        <position position="190"/>
    </location>
</feature>
<feature type="modified residue" description="Phosphoserine" evidence="26">
    <location>
        <position position="193"/>
    </location>
</feature>
<feature type="modified residue" description="Phosphothreonine" evidence="24 26">
    <location>
        <position position="210"/>
    </location>
</feature>
<feature type="modified residue" description="Phosphothreonine" evidence="26">
    <location>
        <position position="323"/>
    </location>
</feature>
<feature type="modified residue" description="Phosphoserine" evidence="26">
    <location>
        <position position="324"/>
    </location>
</feature>
<feature type="modified residue" description="Phosphothreonine" evidence="26">
    <location>
        <position position="325"/>
    </location>
</feature>
<feature type="modified residue" description="Phosphothreonine" evidence="23">
    <location>
        <position position="352"/>
    </location>
</feature>
<feature type="modified residue" description="Phosphoserine" evidence="25">
    <location>
        <position position="605"/>
    </location>
</feature>
<feature type="strand" evidence="27">
    <location>
        <begin position="240"/>
        <end position="247"/>
    </location>
</feature>
<feature type="turn" evidence="27">
    <location>
        <begin position="248"/>
        <end position="251"/>
    </location>
</feature>
<feature type="strand" evidence="27">
    <location>
        <begin position="252"/>
        <end position="260"/>
    </location>
</feature>
<feature type="strand" evidence="27">
    <location>
        <begin position="266"/>
        <end position="269"/>
    </location>
</feature>
<feature type="helix" evidence="27">
    <location>
        <begin position="270"/>
        <end position="272"/>
    </location>
</feature>
<feature type="strand" evidence="27">
    <location>
        <begin position="273"/>
        <end position="278"/>
    </location>
</feature>
<feature type="turn" evidence="27">
    <location>
        <begin position="279"/>
        <end position="282"/>
    </location>
</feature>
<feature type="strand" evidence="27">
    <location>
        <begin position="283"/>
        <end position="287"/>
    </location>
</feature>
<feature type="strand" evidence="27">
    <location>
        <begin position="292"/>
        <end position="296"/>
    </location>
</feature>
<feature type="helix" evidence="27">
    <location>
        <begin position="300"/>
        <end position="311"/>
    </location>
</feature>
<feature type="helix" evidence="27">
    <location>
        <begin position="312"/>
        <end position="314"/>
    </location>
</feature>
<feature type="helix" evidence="28">
    <location>
        <begin position="643"/>
        <end position="649"/>
    </location>
</feature>
<feature type="strand" evidence="28">
    <location>
        <begin position="650"/>
        <end position="653"/>
    </location>
</feature>
<feature type="helix" evidence="28">
    <location>
        <begin position="655"/>
        <end position="657"/>
    </location>
</feature>
<feature type="helix" evidence="28">
    <location>
        <begin position="662"/>
        <end position="664"/>
    </location>
</feature>
<feature type="strand" evidence="28">
    <location>
        <begin position="665"/>
        <end position="669"/>
    </location>
</feature>
<feature type="helix" evidence="28">
    <location>
        <begin position="670"/>
        <end position="675"/>
    </location>
</feature>
<feature type="helix" evidence="28">
    <location>
        <begin position="676"/>
        <end position="678"/>
    </location>
</feature>
<feature type="turn" evidence="28">
    <location>
        <begin position="679"/>
        <end position="681"/>
    </location>
</feature>
<feature type="helix" evidence="28">
    <location>
        <begin position="682"/>
        <end position="687"/>
    </location>
</feature>
<feature type="helix" evidence="28">
    <location>
        <begin position="693"/>
        <end position="703"/>
    </location>
</feature>
<feature type="helix" evidence="28">
    <location>
        <begin position="704"/>
        <end position="708"/>
    </location>
</feature>
<feature type="helix" evidence="28">
    <location>
        <begin position="711"/>
        <end position="715"/>
    </location>
</feature>
<feature type="strand" evidence="28">
    <location>
        <begin position="717"/>
        <end position="719"/>
    </location>
</feature>
<feature type="strand" evidence="28">
    <location>
        <begin position="726"/>
        <end position="731"/>
    </location>
</feature>
<feature type="helix" evidence="28">
    <location>
        <begin position="732"/>
        <end position="734"/>
    </location>
</feature>
<feature type="strand" evidence="28">
    <location>
        <begin position="736"/>
        <end position="744"/>
    </location>
</feature>
<feature type="turn" evidence="28">
    <location>
        <begin position="745"/>
        <end position="748"/>
    </location>
</feature>
<feature type="strand" evidence="28">
    <location>
        <begin position="749"/>
        <end position="771"/>
    </location>
</feature>
<feature type="strand" evidence="28">
    <location>
        <begin position="773"/>
        <end position="788"/>
    </location>
</feature>
<feature type="turn" evidence="28">
    <location>
        <begin position="789"/>
        <end position="791"/>
    </location>
</feature>
<feature type="strand" evidence="28">
    <location>
        <begin position="794"/>
        <end position="798"/>
    </location>
</feature>
<feature type="strand" evidence="28">
    <location>
        <begin position="802"/>
        <end position="805"/>
    </location>
</feature>
<feature type="strand" evidence="28">
    <location>
        <begin position="807"/>
        <end position="810"/>
    </location>
</feature>
<feature type="strand" evidence="28">
    <location>
        <begin position="813"/>
        <end position="816"/>
    </location>
</feature>
<feature type="strand" evidence="28">
    <location>
        <begin position="818"/>
        <end position="824"/>
    </location>
</feature>
<feature type="strand" evidence="28">
    <location>
        <begin position="829"/>
        <end position="834"/>
    </location>
</feature>
<feature type="strand" evidence="28">
    <location>
        <begin position="838"/>
        <end position="841"/>
    </location>
</feature>
<feature type="strand" evidence="28">
    <location>
        <begin position="846"/>
        <end position="852"/>
    </location>
</feature>
<feature type="strand" evidence="28">
    <location>
        <begin position="862"/>
        <end position="867"/>
    </location>
</feature>
<feature type="turn" evidence="28">
    <location>
        <begin position="868"/>
        <end position="870"/>
    </location>
</feature>
<feature type="strand" evidence="28">
    <location>
        <begin position="871"/>
        <end position="874"/>
    </location>
</feature>
<feature type="turn" evidence="28">
    <location>
        <begin position="875"/>
        <end position="877"/>
    </location>
</feature>
<feature type="strand" evidence="28">
    <location>
        <begin position="880"/>
        <end position="883"/>
    </location>
</feature>
<feature type="helix" evidence="28">
    <location>
        <begin position="891"/>
        <end position="893"/>
    </location>
</feature>
<feature type="turn" evidence="28">
    <location>
        <begin position="894"/>
        <end position="896"/>
    </location>
</feature>
<feature type="helix" evidence="28">
    <location>
        <begin position="899"/>
        <end position="904"/>
    </location>
</feature>
<feature type="turn" evidence="28">
    <location>
        <begin position="909"/>
        <end position="914"/>
    </location>
</feature>
<feature type="helix" evidence="28">
    <location>
        <begin position="920"/>
        <end position="922"/>
    </location>
</feature>
<feature type="helix" evidence="28">
    <location>
        <begin position="924"/>
        <end position="930"/>
    </location>
</feature>
<feature type="helix" evidence="28">
    <location>
        <begin position="934"/>
        <end position="953"/>
    </location>
</feature>
<feature type="strand" evidence="28">
    <location>
        <begin position="961"/>
        <end position="967"/>
    </location>
</feature>
<feature type="strand" evidence="28">
    <location>
        <begin position="970"/>
        <end position="973"/>
    </location>
</feature>
<feature type="helix" evidence="28">
    <location>
        <begin position="980"/>
        <end position="985"/>
    </location>
</feature>